<feature type="chain" id="PRO_0000174504" description="S-adenosylmethionine synthase">
    <location>
        <begin position="1"/>
        <end position="395"/>
    </location>
</feature>
<feature type="region of interest" description="Flexible loop" evidence="1">
    <location>
        <begin position="100"/>
        <end position="110"/>
    </location>
</feature>
<feature type="binding site" description="in other chain" evidence="1">
    <location>
        <position position="16"/>
    </location>
    <ligand>
        <name>ATP</name>
        <dbReference type="ChEBI" id="CHEBI:30616"/>
        <note>ligand shared between two neighboring subunits</note>
    </ligand>
</feature>
<feature type="binding site" evidence="1">
    <location>
        <position position="18"/>
    </location>
    <ligand>
        <name>Mg(2+)</name>
        <dbReference type="ChEBI" id="CHEBI:18420"/>
    </ligand>
</feature>
<feature type="binding site" evidence="1">
    <location>
        <position position="44"/>
    </location>
    <ligand>
        <name>K(+)</name>
        <dbReference type="ChEBI" id="CHEBI:29103"/>
    </ligand>
</feature>
<feature type="binding site" description="in other chain" evidence="1">
    <location>
        <position position="57"/>
    </location>
    <ligand>
        <name>L-methionine</name>
        <dbReference type="ChEBI" id="CHEBI:57844"/>
        <note>ligand shared between two neighboring subunits</note>
    </ligand>
</feature>
<feature type="binding site" description="in other chain" evidence="1">
    <location>
        <position position="100"/>
    </location>
    <ligand>
        <name>L-methionine</name>
        <dbReference type="ChEBI" id="CHEBI:57844"/>
        <note>ligand shared between two neighboring subunits</note>
    </ligand>
</feature>
<feature type="binding site" description="in other chain" evidence="1">
    <location>
        <begin position="167"/>
        <end position="169"/>
    </location>
    <ligand>
        <name>ATP</name>
        <dbReference type="ChEBI" id="CHEBI:30616"/>
        <note>ligand shared between two neighboring subunits</note>
    </ligand>
</feature>
<feature type="binding site" description="in other chain" evidence="1">
    <location>
        <begin position="233"/>
        <end position="234"/>
    </location>
    <ligand>
        <name>ATP</name>
        <dbReference type="ChEBI" id="CHEBI:30616"/>
        <note>ligand shared between two neighboring subunits</note>
    </ligand>
</feature>
<feature type="binding site" evidence="1">
    <location>
        <position position="242"/>
    </location>
    <ligand>
        <name>ATP</name>
        <dbReference type="ChEBI" id="CHEBI:30616"/>
        <note>ligand shared between two neighboring subunits</note>
    </ligand>
</feature>
<feature type="binding site" evidence="1">
    <location>
        <position position="242"/>
    </location>
    <ligand>
        <name>L-methionine</name>
        <dbReference type="ChEBI" id="CHEBI:57844"/>
        <note>ligand shared between two neighboring subunits</note>
    </ligand>
</feature>
<feature type="binding site" description="in other chain" evidence="1">
    <location>
        <begin position="248"/>
        <end position="249"/>
    </location>
    <ligand>
        <name>ATP</name>
        <dbReference type="ChEBI" id="CHEBI:30616"/>
        <note>ligand shared between two neighboring subunits</note>
    </ligand>
</feature>
<feature type="binding site" evidence="1">
    <location>
        <position position="265"/>
    </location>
    <ligand>
        <name>ATP</name>
        <dbReference type="ChEBI" id="CHEBI:30616"/>
        <note>ligand shared between two neighboring subunits</note>
    </ligand>
</feature>
<feature type="binding site" evidence="1">
    <location>
        <position position="269"/>
    </location>
    <ligand>
        <name>ATP</name>
        <dbReference type="ChEBI" id="CHEBI:30616"/>
        <note>ligand shared between two neighboring subunits</note>
    </ligand>
</feature>
<feature type="binding site" description="in other chain" evidence="1">
    <location>
        <position position="273"/>
    </location>
    <ligand>
        <name>L-methionine</name>
        <dbReference type="ChEBI" id="CHEBI:57844"/>
        <note>ligand shared between two neighboring subunits</note>
    </ligand>
</feature>
<reference key="1">
    <citation type="journal article" date="2004" name="Proc. Natl. Acad. Sci. U.S.A.">
        <title>Structural flexibility in the Burkholderia mallei genome.</title>
        <authorList>
            <person name="Nierman W.C."/>
            <person name="DeShazer D."/>
            <person name="Kim H.S."/>
            <person name="Tettelin H."/>
            <person name="Nelson K.E."/>
            <person name="Feldblyum T.V."/>
            <person name="Ulrich R.L."/>
            <person name="Ronning C.M."/>
            <person name="Brinkac L.M."/>
            <person name="Daugherty S.C."/>
            <person name="Davidsen T.D."/>
            <person name="DeBoy R.T."/>
            <person name="Dimitrov G."/>
            <person name="Dodson R.J."/>
            <person name="Durkin A.S."/>
            <person name="Gwinn M.L."/>
            <person name="Haft D.H."/>
            <person name="Khouri H.M."/>
            <person name="Kolonay J.F."/>
            <person name="Madupu R."/>
            <person name="Mohammoud Y."/>
            <person name="Nelson W.C."/>
            <person name="Radune D."/>
            <person name="Romero C.M."/>
            <person name="Sarria S."/>
            <person name="Selengut J."/>
            <person name="Shamblin C."/>
            <person name="Sullivan S.A."/>
            <person name="White O."/>
            <person name="Yu Y."/>
            <person name="Zafar N."/>
            <person name="Zhou L."/>
            <person name="Fraser C.M."/>
        </authorList>
    </citation>
    <scope>NUCLEOTIDE SEQUENCE [LARGE SCALE GENOMIC DNA]</scope>
    <source>
        <strain>ATCC 23344</strain>
    </source>
</reference>
<protein>
    <recommendedName>
        <fullName evidence="1">S-adenosylmethionine synthase</fullName>
        <shortName evidence="1">AdoMet synthase</shortName>
        <ecNumber evidence="1">2.5.1.6</ecNumber>
    </recommendedName>
    <alternativeName>
        <fullName evidence="1">MAT</fullName>
    </alternativeName>
    <alternativeName>
        <fullName evidence="1">Methionine adenosyltransferase</fullName>
    </alternativeName>
</protein>
<dbReference type="EC" id="2.5.1.6" evidence="1"/>
<dbReference type="EMBL" id="CP000010">
    <property type="protein sequence ID" value="AAU48477.1"/>
    <property type="molecule type" value="Genomic_DNA"/>
</dbReference>
<dbReference type="RefSeq" id="WP_004199069.1">
    <property type="nucleotide sequence ID" value="NC_006348.1"/>
</dbReference>
<dbReference type="RefSeq" id="YP_104736.1">
    <property type="nucleotide sequence ID" value="NC_006348.1"/>
</dbReference>
<dbReference type="SMR" id="Q62EZ1"/>
<dbReference type="GeneID" id="93058721"/>
<dbReference type="KEGG" id="bma:BMA3262"/>
<dbReference type="PATRIC" id="fig|243160.12.peg.3344"/>
<dbReference type="eggNOG" id="COG0192">
    <property type="taxonomic scope" value="Bacteria"/>
</dbReference>
<dbReference type="HOGENOM" id="CLU_041802_1_1_4"/>
<dbReference type="UniPathway" id="UPA00315">
    <property type="reaction ID" value="UER00080"/>
</dbReference>
<dbReference type="Proteomes" id="UP000006693">
    <property type="component" value="Chromosome 1"/>
</dbReference>
<dbReference type="GO" id="GO:0005737">
    <property type="term" value="C:cytoplasm"/>
    <property type="evidence" value="ECO:0007669"/>
    <property type="project" value="UniProtKB-SubCell"/>
</dbReference>
<dbReference type="GO" id="GO:0005524">
    <property type="term" value="F:ATP binding"/>
    <property type="evidence" value="ECO:0007669"/>
    <property type="project" value="UniProtKB-UniRule"/>
</dbReference>
<dbReference type="GO" id="GO:0000287">
    <property type="term" value="F:magnesium ion binding"/>
    <property type="evidence" value="ECO:0007669"/>
    <property type="project" value="UniProtKB-UniRule"/>
</dbReference>
<dbReference type="GO" id="GO:0004478">
    <property type="term" value="F:methionine adenosyltransferase activity"/>
    <property type="evidence" value="ECO:0007669"/>
    <property type="project" value="UniProtKB-UniRule"/>
</dbReference>
<dbReference type="GO" id="GO:0006730">
    <property type="term" value="P:one-carbon metabolic process"/>
    <property type="evidence" value="ECO:0007669"/>
    <property type="project" value="UniProtKB-KW"/>
</dbReference>
<dbReference type="GO" id="GO:0006556">
    <property type="term" value="P:S-adenosylmethionine biosynthetic process"/>
    <property type="evidence" value="ECO:0007669"/>
    <property type="project" value="UniProtKB-UniRule"/>
</dbReference>
<dbReference type="CDD" id="cd18079">
    <property type="entry name" value="S-AdoMet_synt"/>
    <property type="match status" value="1"/>
</dbReference>
<dbReference type="FunFam" id="3.30.300.10:FF:000003">
    <property type="entry name" value="S-adenosylmethionine synthase"/>
    <property type="match status" value="1"/>
</dbReference>
<dbReference type="FunFam" id="3.30.300.10:FF:000004">
    <property type="entry name" value="S-adenosylmethionine synthase"/>
    <property type="match status" value="1"/>
</dbReference>
<dbReference type="Gene3D" id="3.30.300.10">
    <property type="match status" value="3"/>
</dbReference>
<dbReference type="HAMAP" id="MF_00086">
    <property type="entry name" value="S_AdoMet_synth1"/>
    <property type="match status" value="1"/>
</dbReference>
<dbReference type="InterPro" id="IPR022631">
    <property type="entry name" value="ADOMET_SYNTHASE_CS"/>
</dbReference>
<dbReference type="InterPro" id="IPR022630">
    <property type="entry name" value="S-AdoMet_synt_C"/>
</dbReference>
<dbReference type="InterPro" id="IPR022629">
    <property type="entry name" value="S-AdoMet_synt_central"/>
</dbReference>
<dbReference type="InterPro" id="IPR022628">
    <property type="entry name" value="S-AdoMet_synt_N"/>
</dbReference>
<dbReference type="InterPro" id="IPR002133">
    <property type="entry name" value="S-AdoMet_synthetase"/>
</dbReference>
<dbReference type="InterPro" id="IPR022636">
    <property type="entry name" value="S-AdoMet_synthetase_sfam"/>
</dbReference>
<dbReference type="NCBIfam" id="TIGR01034">
    <property type="entry name" value="metK"/>
    <property type="match status" value="1"/>
</dbReference>
<dbReference type="PANTHER" id="PTHR11964">
    <property type="entry name" value="S-ADENOSYLMETHIONINE SYNTHETASE"/>
    <property type="match status" value="1"/>
</dbReference>
<dbReference type="Pfam" id="PF02773">
    <property type="entry name" value="S-AdoMet_synt_C"/>
    <property type="match status" value="1"/>
</dbReference>
<dbReference type="Pfam" id="PF02772">
    <property type="entry name" value="S-AdoMet_synt_M"/>
    <property type="match status" value="1"/>
</dbReference>
<dbReference type="Pfam" id="PF00438">
    <property type="entry name" value="S-AdoMet_synt_N"/>
    <property type="match status" value="1"/>
</dbReference>
<dbReference type="PIRSF" id="PIRSF000497">
    <property type="entry name" value="MAT"/>
    <property type="match status" value="1"/>
</dbReference>
<dbReference type="SUPFAM" id="SSF55973">
    <property type="entry name" value="S-adenosylmethionine synthetase"/>
    <property type="match status" value="3"/>
</dbReference>
<dbReference type="PROSITE" id="PS00376">
    <property type="entry name" value="ADOMET_SYNTHASE_1"/>
    <property type="match status" value="1"/>
</dbReference>
<dbReference type="PROSITE" id="PS00377">
    <property type="entry name" value="ADOMET_SYNTHASE_2"/>
    <property type="match status" value="1"/>
</dbReference>
<comment type="function">
    <text evidence="1">Catalyzes the formation of S-adenosylmethionine (AdoMet) from methionine and ATP. The overall synthetic reaction is composed of two sequential steps, AdoMet formation and the subsequent tripolyphosphate hydrolysis which occurs prior to release of AdoMet from the enzyme.</text>
</comment>
<comment type="catalytic activity">
    <reaction evidence="1">
        <text>L-methionine + ATP + H2O = S-adenosyl-L-methionine + phosphate + diphosphate</text>
        <dbReference type="Rhea" id="RHEA:21080"/>
        <dbReference type="ChEBI" id="CHEBI:15377"/>
        <dbReference type="ChEBI" id="CHEBI:30616"/>
        <dbReference type="ChEBI" id="CHEBI:33019"/>
        <dbReference type="ChEBI" id="CHEBI:43474"/>
        <dbReference type="ChEBI" id="CHEBI:57844"/>
        <dbReference type="ChEBI" id="CHEBI:59789"/>
        <dbReference type="EC" id="2.5.1.6"/>
    </reaction>
</comment>
<comment type="cofactor">
    <cofactor evidence="1">
        <name>Mg(2+)</name>
        <dbReference type="ChEBI" id="CHEBI:18420"/>
    </cofactor>
    <text evidence="1">Binds 2 divalent ions per subunit.</text>
</comment>
<comment type="cofactor">
    <cofactor evidence="1">
        <name>K(+)</name>
        <dbReference type="ChEBI" id="CHEBI:29103"/>
    </cofactor>
    <text evidence="1">Binds 1 potassium ion per subunit.</text>
</comment>
<comment type="pathway">
    <text evidence="1">Amino-acid biosynthesis; S-adenosyl-L-methionine biosynthesis; S-adenosyl-L-methionine from L-methionine: step 1/1.</text>
</comment>
<comment type="subunit">
    <text evidence="1">Homotetramer; dimer of dimers.</text>
</comment>
<comment type="subcellular location">
    <subcellularLocation>
        <location evidence="1">Cytoplasm</location>
    </subcellularLocation>
</comment>
<comment type="similarity">
    <text evidence="1">Belongs to the AdoMet synthase family.</text>
</comment>
<sequence length="395" mass="42641">MANDYLFTSESVSEGHPDKVADQISDAILDAILAQDKYSRVAAETLCNTGLVVLAGEITTTANIDYIQIARDTIKRIGYDNTDYGIDYRGCAVLVAYDKQSPDIAQGVDRAHDNNLDQGAGDQGLMFGYACDETPELMPLPIHLSHRLVERQANLRRDGRLPWLRPDAKSQVTVRYVDGKPHSIDTVVLSTQHAPEIDLPALREAVIEEVIKPTLPADLIKGDIKFLVNPTGRFVIGGPQGDCGLTGRKIIVDTYGGAAPHGGGAFSGKDPSKVDRSAAYAGRYVAKNIVAAGLASRALIQVSYAIGVAEPTSVMVNTFGTGRVSDETITKLVREHFDLRPKGIIQMLDLLRPIYEKTAAYGHFGREEPEFSWEAADKALALAEAAGVEPAVQVA</sequence>
<evidence type="ECO:0000255" key="1">
    <source>
        <dbReference type="HAMAP-Rule" id="MF_00086"/>
    </source>
</evidence>
<name>METK_BURMA</name>
<organism>
    <name type="scientific">Burkholderia mallei (strain ATCC 23344)</name>
    <dbReference type="NCBI Taxonomy" id="243160"/>
    <lineage>
        <taxon>Bacteria</taxon>
        <taxon>Pseudomonadati</taxon>
        <taxon>Pseudomonadota</taxon>
        <taxon>Betaproteobacteria</taxon>
        <taxon>Burkholderiales</taxon>
        <taxon>Burkholderiaceae</taxon>
        <taxon>Burkholderia</taxon>
        <taxon>pseudomallei group</taxon>
    </lineage>
</organism>
<accession>Q62EZ1</accession>
<gene>
    <name evidence="1" type="primary">metK</name>
    <name type="ordered locus">BMA3262</name>
</gene>
<proteinExistence type="inferred from homology"/>
<keyword id="KW-0067">ATP-binding</keyword>
<keyword id="KW-0963">Cytoplasm</keyword>
<keyword id="KW-0460">Magnesium</keyword>
<keyword id="KW-0479">Metal-binding</keyword>
<keyword id="KW-0547">Nucleotide-binding</keyword>
<keyword id="KW-0554">One-carbon metabolism</keyword>
<keyword id="KW-0630">Potassium</keyword>
<keyword id="KW-1185">Reference proteome</keyword>
<keyword id="KW-0808">Transferase</keyword>